<organism>
    <name type="scientific">Escherichia coli (strain UTI89 / UPEC)</name>
    <dbReference type="NCBI Taxonomy" id="364106"/>
    <lineage>
        <taxon>Bacteria</taxon>
        <taxon>Pseudomonadati</taxon>
        <taxon>Pseudomonadota</taxon>
        <taxon>Gammaproteobacteria</taxon>
        <taxon>Enterobacterales</taxon>
        <taxon>Enterobacteriaceae</taxon>
        <taxon>Escherichia</taxon>
    </lineage>
</organism>
<evidence type="ECO:0000255" key="1">
    <source>
        <dbReference type="HAMAP-Rule" id="MF_00188"/>
    </source>
</evidence>
<keyword id="KW-0997">Cell inner membrane</keyword>
<keyword id="KW-1003">Cell membrane</keyword>
<keyword id="KW-0378">Hydrolase</keyword>
<keyword id="KW-0472">Membrane</keyword>
<keyword id="KW-0479">Metal-binding</keyword>
<keyword id="KW-0482">Metalloprotease</keyword>
<keyword id="KW-0645">Protease</keyword>
<keyword id="KW-0346">Stress response</keyword>
<keyword id="KW-0812">Transmembrane</keyword>
<keyword id="KW-1133">Transmembrane helix</keyword>
<keyword id="KW-0862">Zinc</keyword>
<accession>Q1RAV8</accession>
<protein>
    <recommendedName>
        <fullName evidence="1">Protease HtpX</fullName>
        <ecNumber evidence="1">3.4.24.-</ecNumber>
    </recommendedName>
    <alternativeName>
        <fullName evidence="1">Heat shock protein HtpX</fullName>
    </alternativeName>
</protein>
<sequence>MMRIALFLLTNLAVMVVFGLVLSLTGIQSSSVQGLMIMALLFGFGGSFVSLLMSKWMALRSVGGEVIEQPRNERERWLVNTVATQARQAGIAMPQVAIYHAPDINAFATGARRDASLVAVSTGLLQNMSPDEAEAVIAHEISHIANGDMVTMTLIQGVVNTFVIFISRILAQLAAGFMGGNRDEGEESNGNPLIYFAVATVLELVFGILASIITMWFSRHREFHADAGSAKLVGREKMIAALQRLKTSYEPQEATSMMAFCINGKSKSLSELFMTHPPLDKRIEALRTGEYLK</sequence>
<comment type="cofactor">
    <cofactor evidence="1">
        <name>Zn(2+)</name>
        <dbReference type="ChEBI" id="CHEBI:29105"/>
    </cofactor>
    <text evidence="1">Binds 1 zinc ion per subunit.</text>
</comment>
<comment type="subcellular location">
    <subcellularLocation>
        <location evidence="1">Cell inner membrane</location>
        <topology evidence="1">Multi-pass membrane protein</topology>
    </subcellularLocation>
</comment>
<comment type="similarity">
    <text evidence="1">Belongs to the peptidase M48B family.</text>
</comment>
<gene>
    <name evidence="1" type="primary">htpX</name>
    <name type="ordered locus">UTI89_C2030</name>
</gene>
<dbReference type="EC" id="3.4.24.-" evidence="1"/>
<dbReference type="EMBL" id="CP000243">
    <property type="protein sequence ID" value="ABE07506.1"/>
    <property type="molecule type" value="Genomic_DNA"/>
</dbReference>
<dbReference type="RefSeq" id="WP_000984517.1">
    <property type="nucleotide sequence ID" value="NZ_CP064825.1"/>
</dbReference>
<dbReference type="SMR" id="Q1RAV8"/>
<dbReference type="MEROPS" id="M48.002"/>
<dbReference type="GeneID" id="93776079"/>
<dbReference type="KEGG" id="eci:UTI89_C2030"/>
<dbReference type="HOGENOM" id="CLU_042266_1_0_6"/>
<dbReference type="Proteomes" id="UP000001952">
    <property type="component" value="Chromosome"/>
</dbReference>
<dbReference type="GO" id="GO:0005886">
    <property type="term" value="C:plasma membrane"/>
    <property type="evidence" value="ECO:0007669"/>
    <property type="project" value="UniProtKB-SubCell"/>
</dbReference>
<dbReference type="GO" id="GO:0004222">
    <property type="term" value="F:metalloendopeptidase activity"/>
    <property type="evidence" value="ECO:0007669"/>
    <property type="project" value="UniProtKB-UniRule"/>
</dbReference>
<dbReference type="GO" id="GO:0008270">
    <property type="term" value="F:zinc ion binding"/>
    <property type="evidence" value="ECO:0007669"/>
    <property type="project" value="UniProtKB-UniRule"/>
</dbReference>
<dbReference type="GO" id="GO:0006508">
    <property type="term" value="P:proteolysis"/>
    <property type="evidence" value="ECO:0007669"/>
    <property type="project" value="UniProtKB-KW"/>
</dbReference>
<dbReference type="CDD" id="cd07335">
    <property type="entry name" value="M48B_HtpX_like"/>
    <property type="match status" value="1"/>
</dbReference>
<dbReference type="FunFam" id="3.30.2010.10:FF:000001">
    <property type="entry name" value="Protease HtpX"/>
    <property type="match status" value="1"/>
</dbReference>
<dbReference type="Gene3D" id="3.30.2010.10">
    <property type="entry name" value="Metalloproteases ('zincins'), catalytic domain"/>
    <property type="match status" value="1"/>
</dbReference>
<dbReference type="HAMAP" id="MF_00188">
    <property type="entry name" value="Pept_M48_protease_HtpX"/>
    <property type="match status" value="1"/>
</dbReference>
<dbReference type="InterPro" id="IPR050083">
    <property type="entry name" value="HtpX_protease"/>
</dbReference>
<dbReference type="InterPro" id="IPR022919">
    <property type="entry name" value="Pept_M48_protease_HtpX"/>
</dbReference>
<dbReference type="InterPro" id="IPR001915">
    <property type="entry name" value="Peptidase_M48"/>
</dbReference>
<dbReference type="NCBIfam" id="NF003965">
    <property type="entry name" value="PRK05457.1"/>
    <property type="match status" value="1"/>
</dbReference>
<dbReference type="PANTHER" id="PTHR43221">
    <property type="entry name" value="PROTEASE HTPX"/>
    <property type="match status" value="1"/>
</dbReference>
<dbReference type="PANTHER" id="PTHR43221:SF1">
    <property type="entry name" value="PROTEASE HTPX"/>
    <property type="match status" value="1"/>
</dbReference>
<dbReference type="Pfam" id="PF01435">
    <property type="entry name" value="Peptidase_M48"/>
    <property type="match status" value="1"/>
</dbReference>
<feature type="chain" id="PRO_1000020864" description="Protease HtpX">
    <location>
        <begin position="1"/>
        <end position="293"/>
    </location>
</feature>
<feature type="transmembrane region" description="Helical" evidence="1">
    <location>
        <begin position="4"/>
        <end position="24"/>
    </location>
</feature>
<feature type="transmembrane region" description="Helical" evidence="1">
    <location>
        <begin position="34"/>
        <end position="54"/>
    </location>
</feature>
<feature type="transmembrane region" description="Helical" evidence="1">
    <location>
        <begin position="158"/>
        <end position="178"/>
    </location>
</feature>
<feature type="transmembrane region" description="Helical" evidence="1">
    <location>
        <begin position="193"/>
        <end position="213"/>
    </location>
</feature>
<feature type="active site" evidence="1">
    <location>
        <position position="140"/>
    </location>
</feature>
<feature type="binding site" evidence="1">
    <location>
        <position position="139"/>
    </location>
    <ligand>
        <name>Zn(2+)</name>
        <dbReference type="ChEBI" id="CHEBI:29105"/>
        <note>catalytic</note>
    </ligand>
</feature>
<feature type="binding site" evidence="1">
    <location>
        <position position="143"/>
    </location>
    <ligand>
        <name>Zn(2+)</name>
        <dbReference type="ChEBI" id="CHEBI:29105"/>
        <note>catalytic</note>
    </ligand>
</feature>
<feature type="binding site" evidence="1">
    <location>
        <position position="222"/>
    </location>
    <ligand>
        <name>Zn(2+)</name>
        <dbReference type="ChEBI" id="CHEBI:29105"/>
        <note>catalytic</note>
    </ligand>
</feature>
<proteinExistence type="inferred from homology"/>
<name>HTPX_ECOUT</name>
<reference key="1">
    <citation type="journal article" date="2006" name="Proc. Natl. Acad. Sci. U.S.A.">
        <title>Identification of genes subject to positive selection in uropathogenic strains of Escherichia coli: a comparative genomics approach.</title>
        <authorList>
            <person name="Chen S.L."/>
            <person name="Hung C.-S."/>
            <person name="Xu J."/>
            <person name="Reigstad C.S."/>
            <person name="Magrini V."/>
            <person name="Sabo A."/>
            <person name="Blasiar D."/>
            <person name="Bieri T."/>
            <person name="Meyer R.R."/>
            <person name="Ozersky P."/>
            <person name="Armstrong J.R."/>
            <person name="Fulton R.S."/>
            <person name="Latreille J.P."/>
            <person name="Spieth J."/>
            <person name="Hooton T.M."/>
            <person name="Mardis E.R."/>
            <person name="Hultgren S.J."/>
            <person name="Gordon J.I."/>
        </authorList>
    </citation>
    <scope>NUCLEOTIDE SEQUENCE [LARGE SCALE GENOMIC DNA]</scope>
    <source>
        <strain>UTI89 / UPEC</strain>
    </source>
</reference>